<name>YQ9A_SCHPO</name>
<proteinExistence type="inferred from homology"/>
<organism>
    <name type="scientific">Schizosaccharomyces pombe (strain 972 / ATCC 24843)</name>
    <name type="common">Fission yeast</name>
    <dbReference type="NCBI Taxonomy" id="284812"/>
    <lineage>
        <taxon>Eukaryota</taxon>
        <taxon>Fungi</taxon>
        <taxon>Dikarya</taxon>
        <taxon>Ascomycota</taxon>
        <taxon>Taphrinomycotina</taxon>
        <taxon>Schizosaccharomycetes</taxon>
        <taxon>Schizosaccharomycetales</taxon>
        <taxon>Schizosaccharomycetaceae</taxon>
        <taxon>Schizosaccharomyces</taxon>
    </lineage>
</organism>
<protein>
    <recommendedName>
        <fullName>Putative pyridoxal kinase C18.10</fullName>
        <ecNumber>2.7.1.35</ecNumber>
    </recommendedName>
</protein>
<gene>
    <name type="ORF">SPCC18.10</name>
</gene>
<comment type="function">
    <text evidence="1">Required for synthesis of pyridoxal-5-phosphate from vitamin B6.</text>
</comment>
<comment type="catalytic activity">
    <reaction>
        <text>pyridoxal + ATP = pyridoxal 5'-phosphate + ADP + H(+)</text>
        <dbReference type="Rhea" id="RHEA:10224"/>
        <dbReference type="ChEBI" id="CHEBI:15378"/>
        <dbReference type="ChEBI" id="CHEBI:17310"/>
        <dbReference type="ChEBI" id="CHEBI:30616"/>
        <dbReference type="ChEBI" id="CHEBI:456216"/>
        <dbReference type="ChEBI" id="CHEBI:597326"/>
        <dbReference type="EC" id="2.7.1.35"/>
    </reaction>
</comment>
<comment type="cofactor">
    <cofactor evidence="1">
        <name>a divalent metal cation</name>
        <dbReference type="ChEBI" id="CHEBI:60240"/>
    </cofactor>
</comment>
<comment type="subcellular location">
    <subcellularLocation>
        <location>Cytoplasm</location>
    </subcellularLocation>
    <subcellularLocation>
        <location>Nucleus</location>
    </subcellularLocation>
</comment>
<comment type="similarity">
    <text evidence="2">Belongs to the pyridoxine kinase family.</text>
</comment>
<evidence type="ECO:0000250" key="1"/>
<evidence type="ECO:0000305" key="2"/>
<feature type="chain" id="PRO_0000339163" description="Putative pyridoxal kinase C18.10">
    <location>
        <begin position="1"/>
        <end position="340"/>
    </location>
</feature>
<feature type="binding site" evidence="1">
    <location>
        <position position="19"/>
    </location>
    <ligand>
        <name>substrate</name>
    </ligand>
</feature>
<feature type="binding site" evidence="1">
    <location>
        <position position="130"/>
    </location>
    <ligand>
        <name>substrate</name>
    </ligand>
</feature>
<feature type="binding site" evidence="1">
    <location>
        <begin position="189"/>
        <end position="190"/>
    </location>
    <ligand>
        <name>ATP</name>
        <dbReference type="ChEBI" id="CHEBI:30616"/>
    </ligand>
</feature>
<feature type="binding site" evidence="1">
    <location>
        <begin position="218"/>
        <end position="230"/>
    </location>
    <ligand>
        <name>ATP</name>
        <dbReference type="ChEBI" id="CHEBI:30616"/>
    </ligand>
</feature>
<feature type="binding site" evidence="1">
    <location>
        <position position="231"/>
    </location>
    <ligand>
        <name>substrate</name>
    </ligand>
</feature>
<sequence length="340" mass="38080">MTFPNVKFIGNKRVLSIQSSVSHGYVGNRSATFPLQLHEWEVDVVPTVHFSNHLGYGATRGSACIPEEVHDLLNALLQDNGIVYDAILTGFVPNHDIIQVIFDCVLAYKKDHPKVLWLLDPVMGDQGKMYVDTNVISTYKAMIPHAFAITPNAFEVEILTDIVIHTQMDAKRGLEKIYQLYGIQNAIITSFEVEESPGTLFCMGYSCEHGKPQLFLYQFPSLSGVFTGTGDLFSGLLLAKYREELDKRKHQQSDETKQTKRPTVLACAVGQVLSCMHTVLVNTKTYADEILLEDPKIASDEFLLSNARELRLIQSRTALLSKKSIYEAEFLPGFEEGEDV</sequence>
<reference key="1">
    <citation type="journal article" date="2002" name="Nature">
        <title>The genome sequence of Schizosaccharomyces pombe.</title>
        <authorList>
            <person name="Wood V."/>
            <person name="Gwilliam R."/>
            <person name="Rajandream M.A."/>
            <person name="Lyne M.H."/>
            <person name="Lyne R."/>
            <person name="Stewart A."/>
            <person name="Sgouros J.G."/>
            <person name="Peat N."/>
            <person name="Hayles J."/>
            <person name="Baker S.G."/>
            <person name="Basham D."/>
            <person name="Bowman S."/>
            <person name="Brooks K."/>
            <person name="Brown D."/>
            <person name="Brown S."/>
            <person name="Chillingworth T."/>
            <person name="Churcher C.M."/>
            <person name="Collins M."/>
            <person name="Connor R."/>
            <person name="Cronin A."/>
            <person name="Davis P."/>
            <person name="Feltwell T."/>
            <person name="Fraser A."/>
            <person name="Gentles S."/>
            <person name="Goble A."/>
            <person name="Hamlin N."/>
            <person name="Harris D.E."/>
            <person name="Hidalgo J."/>
            <person name="Hodgson G."/>
            <person name="Holroyd S."/>
            <person name="Hornsby T."/>
            <person name="Howarth S."/>
            <person name="Huckle E.J."/>
            <person name="Hunt S."/>
            <person name="Jagels K."/>
            <person name="James K.D."/>
            <person name="Jones L."/>
            <person name="Jones M."/>
            <person name="Leather S."/>
            <person name="McDonald S."/>
            <person name="McLean J."/>
            <person name="Mooney P."/>
            <person name="Moule S."/>
            <person name="Mungall K.L."/>
            <person name="Murphy L.D."/>
            <person name="Niblett D."/>
            <person name="Odell C."/>
            <person name="Oliver K."/>
            <person name="O'Neil S."/>
            <person name="Pearson D."/>
            <person name="Quail M.A."/>
            <person name="Rabbinowitsch E."/>
            <person name="Rutherford K.M."/>
            <person name="Rutter S."/>
            <person name="Saunders D."/>
            <person name="Seeger K."/>
            <person name="Sharp S."/>
            <person name="Skelton J."/>
            <person name="Simmonds M.N."/>
            <person name="Squares R."/>
            <person name="Squares S."/>
            <person name="Stevens K."/>
            <person name="Taylor K."/>
            <person name="Taylor R.G."/>
            <person name="Tivey A."/>
            <person name="Walsh S.V."/>
            <person name="Warren T."/>
            <person name="Whitehead S."/>
            <person name="Woodward J.R."/>
            <person name="Volckaert G."/>
            <person name="Aert R."/>
            <person name="Robben J."/>
            <person name="Grymonprez B."/>
            <person name="Weltjens I."/>
            <person name="Vanstreels E."/>
            <person name="Rieger M."/>
            <person name="Schaefer M."/>
            <person name="Mueller-Auer S."/>
            <person name="Gabel C."/>
            <person name="Fuchs M."/>
            <person name="Duesterhoeft A."/>
            <person name="Fritzc C."/>
            <person name="Holzer E."/>
            <person name="Moestl D."/>
            <person name="Hilbert H."/>
            <person name="Borzym K."/>
            <person name="Langer I."/>
            <person name="Beck A."/>
            <person name="Lehrach H."/>
            <person name="Reinhardt R."/>
            <person name="Pohl T.M."/>
            <person name="Eger P."/>
            <person name="Zimmermann W."/>
            <person name="Wedler H."/>
            <person name="Wambutt R."/>
            <person name="Purnelle B."/>
            <person name="Goffeau A."/>
            <person name="Cadieu E."/>
            <person name="Dreano S."/>
            <person name="Gloux S."/>
            <person name="Lelaure V."/>
            <person name="Mottier S."/>
            <person name="Galibert F."/>
            <person name="Aves S.J."/>
            <person name="Xiang Z."/>
            <person name="Hunt C."/>
            <person name="Moore K."/>
            <person name="Hurst S.M."/>
            <person name="Lucas M."/>
            <person name="Rochet M."/>
            <person name="Gaillardin C."/>
            <person name="Tallada V.A."/>
            <person name="Garzon A."/>
            <person name="Thode G."/>
            <person name="Daga R.R."/>
            <person name="Cruzado L."/>
            <person name="Jimenez J."/>
            <person name="Sanchez M."/>
            <person name="del Rey F."/>
            <person name="Benito J."/>
            <person name="Dominguez A."/>
            <person name="Revuelta J.L."/>
            <person name="Moreno S."/>
            <person name="Armstrong J."/>
            <person name="Forsburg S.L."/>
            <person name="Cerutti L."/>
            <person name="Lowe T."/>
            <person name="McCombie W.R."/>
            <person name="Paulsen I."/>
            <person name="Potashkin J."/>
            <person name="Shpakovski G.V."/>
            <person name="Ussery D."/>
            <person name="Barrell B.G."/>
            <person name="Nurse P."/>
        </authorList>
    </citation>
    <scope>NUCLEOTIDE SEQUENCE [LARGE SCALE GENOMIC DNA]</scope>
    <source>
        <strain>972 / ATCC 24843</strain>
    </source>
</reference>
<keyword id="KW-0067">ATP-binding</keyword>
<keyword id="KW-0963">Cytoplasm</keyword>
<keyword id="KW-0418">Kinase</keyword>
<keyword id="KW-0479">Metal-binding</keyword>
<keyword id="KW-0547">Nucleotide-binding</keyword>
<keyword id="KW-0539">Nucleus</keyword>
<keyword id="KW-1185">Reference proteome</keyword>
<keyword id="KW-0808">Transferase</keyword>
<keyword id="KW-0862">Zinc</keyword>
<accession>O74860</accession>
<dbReference type="EC" id="2.7.1.35"/>
<dbReference type="EMBL" id="CU329672">
    <property type="protein sequence ID" value="CAA21424.1"/>
    <property type="molecule type" value="Genomic_DNA"/>
</dbReference>
<dbReference type="PIR" id="T41153">
    <property type="entry name" value="T41153"/>
</dbReference>
<dbReference type="RefSeq" id="NP_588389.1">
    <property type="nucleotide sequence ID" value="NM_001023380.2"/>
</dbReference>
<dbReference type="SMR" id="O74860"/>
<dbReference type="BioGRID" id="275540">
    <property type="interactions" value="96"/>
</dbReference>
<dbReference type="FunCoup" id="O74860">
    <property type="interactions" value="429"/>
</dbReference>
<dbReference type="STRING" id="284812.O74860"/>
<dbReference type="iPTMnet" id="O74860"/>
<dbReference type="PaxDb" id="4896-SPCC18.10.1"/>
<dbReference type="EnsemblFungi" id="SPCC18.10.1">
    <property type="protein sequence ID" value="SPCC18.10.1:pep"/>
    <property type="gene ID" value="SPCC18.10"/>
</dbReference>
<dbReference type="KEGG" id="spo:2538966"/>
<dbReference type="PomBase" id="SPCC18.10"/>
<dbReference type="VEuPathDB" id="FungiDB:SPCC18.10"/>
<dbReference type="eggNOG" id="KOG2599">
    <property type="taxonomic scope" value="Eukaryota"/>
</dbReference>
<dbReference type="HOGENOM" id="CLU_046496_1_0_1"/>
<dbReference type="InParanoid" id="O74860"/>
<dbReference type="OMA" id="AWTHQHP"/>
<dbReference type="PhylomeDB" id="O74860"/>
<dbReference type="Reactome" id="R-SPO-6798695">
    <property type="pathway name" value="Neutrophil degranulation"/>
</dbReference>
<dbReference type="Reactome" id="R-SPO-964975">
    <property type="pathway name" value="Vitamin B6 activation to pyridoxal phosphate"/>
</dbReference>
<dbReference type="PRO" id="PR:O74860"/>
<dbReference type="Proteomes" id="UP000002485">
    <property type="component" value="Chromosome III"/>
</dbReference>
<dbReference type="GO" id="GO:0005829">
    <property type="term" value="C:cytosol"/>
    <property type="evidence" value="ECO:0007005"/>
    <property type="project" value="PomBase"/>
</dbReference>
<dbReference type="GO" id="GO:0005634">
    <property type="term" value="C:nucleus"/>
    <property type="evidence" value="ECO:0007005"/>
    <property type="project" value="PomBase"/>
</dbReference>
<dbReference type="GO" id="GO:0005524">
    <property type="term" value="F:ATP binding"/>
    <property type="evidence" value="ECO:0007669"/>
    <property type="project" value="UniProtKB-KW"/>
</dbReference>
<dbReference type="GO" id="GO:0046872">
    <property type="term" value="F:metal ion binding"/>
    <property type="evidence" value="ECO:0007669"/>
    <property type="project" value="UniProtKB-KW"/>
</dbReference>
<dbReference type="GO" id="GO:0008478">
    <property type="term" value="F:pyridoxal kinase activity"/>
    <property type="evidence" value="ECO:0000318"/>
    <property type="project" value="GO_Central"/>
</dbReference>
<dbReference type="GO" id="GO:0009443">
    <property type="term" value="P:pyridoxal 5'-phosphate salvage"/>
    <property type="evidence" value="ECO:0000318"/>
    <property type="project" value="GO_Central"/>
</dbReference>
<dbReference type="CDD" id="cd01173">
    <property type="entry name" value="pyridoxal_pyridoxamine_kinase"/>
    <property type="match status" value="1"/>
</dbReference>
<dbReference type="FunFam" id="3.40.1190.20:FF:000143">
    <property type="entry name" value="Putative pyridoxal kinase C6F6.11c"/>
    <property type="match status" value="1"/>
</dbReference>
<dbReference type="Gene3D" id="3.40.1190.20">
    <property type="match status" value="1"/>
</dbReference>
<dbReference type="InterPro" id="IPR013749">
    <property type="entry name" value="PM/HMP-P_kinase-1"/>
</dbReference>
<dbReference type="InterPro" id="IPR004625">
    <property type="entry name" value="PyrdxlKinase"/>
</dbReference>
<dbReference type="InterPro" id="IPR029056">
    <property type="entry name" value="Ribokinase-like"/>
</dbReference>
<dbReference type="NCBIfam" id="TIGR00687">
    <property type="entry name" value="pyridox_kin"/>
    <property type="match status" value="1"/>
</dbReference>
<dbReference type="PANTHER" id="PTHR10534">
    <property type="entry name" value="PYRIDOXAL KINASE"/>
    <property type="match status" value="1"/>
</dbReference>
<dbReference type="PANTHER" id="PTHR10534:SF2">
    <property type="entry name" value="PYRIDOXAL KINASE"/>
    <property type="match status" value="1"/>
</dbReference>
<dbReference type="Pfam" id="PF08543">
    <property type="entry name" value="Phos_pyr_kin"/>
    <property type="match status" value="1"/>
</dbReference>
<dbReference type="SUPFAM" id="SSF53613">
    <property type="entry name" value="Ribokinase-like"/>
    <property type="match status" value="1"/>
</dbReference>